<sequence length="204" mass="23732">MFRIVNGEDYSPAVQQRNSLDFGKAPSLLWTDHGGSNDRCETGGNGRESGQDRVKRPMNAFIVWSRDQRRKVALENPQMQNSEISKRLGYDWKMLTEAEKQPFFEEAQRLRAMHRDKYPGYKYRPRRKAKRSQKLLPADSSVLCSRMHIEETLYPFTYKDGCAKATRSRMESRLSRSQPTNTTSSLLPQEHRSSWTSLSHNRVT</sequence>
<protein>
    <recommendedName>
        <fullName>Sex-determining region Y protein</fullName>
    </recommendedName>
    <alternativeName>
        <fullName>Testis-determining factor</fullName>
    </alternativeName>
</protein>
<name>SRY_BALPH</name>
<evidence type="ECO:0000250" key="1">
    <source>
        <dbReference type="UniProtKB" id="P36394"/>
    </source>
</evidence>
<evidence type="ECO:0000250" key="2">
    <source>
        <dbReference type="UniProtKB" id="Q05066"/>
    </source>
</evidence>
<evidence type="ECO:0000255" key="3">
    <source>
        <dbReference type="PROSITE-ProRule" id="PRU00267"/>
    </source>
</evidence>
<evidence type="ECO:0000256" key="4">
    <source>
        <dbReference type="SAM" id="MobiDB-lite"/>
    </source>
</evidence>
<evidence type="ECO:0000305" key="5"/>
<organism>
    <name type="scientific">Balaenoptera physalus</name>
    <name type="common">Fin whale</name>
    <name type="synonym">Balaena physalus</name>
    <dbReference type="NCBI Taxonomy" id="9770"/>
    <lineage>
        <taxon>Eukaryota</taxon>
        <taxon>Metazoa</taxon>
        <taxon>Chordata</taxon>
        <taxon>Craniata</taxon>
        <taxon>Vertebrata</taxon>
        <taxon>Euteleostomi</taxon>
        <taxon>Mammalia</taxon>
        <taxon>Eutheria</taxon>
        <taxon>Laurasiatheria</taxon>
        <taxon>Artiodactyla</taxon>
        <taxon>Whippomorpha</taxon>
        <taxon>Cetacea</taxon>
        <taxon>Mysticeti</taxon>
        <taxon>Balaenopteridae</taxon>
        <taxon>Balaenoptera</taxon>
    </lineage>
</organism>
<gene>
    <name type="primary">SRY</name>
    <name type="synonym">TDF</name>
</gene>
<dbReference type="EMBL" id="AB108512">
    <property type="protein sequence ID" value="BAC75644.1"/>
    <property type="molecule type" value="Genomic_DNA"/>
</dbReference>
<dbReference type="SMR" id="Q864Q9"/>
<dbReference type="GO" id="GO:0005737">
    <property type="term" value="C:cytoplasm"/>
    <property type="evidence" value="ECO:0007669"/>
    <property type="project" value="UniProtKB-SubCell"/>
</dbReference>
<dbReference type="GO" id="GO:0016607">
    <property type="term" value="C:nuclear speck"/>
    <property type="evidence" value="ECO:0007669"/>
    <property type="project" value="UniProtKB-SubCell"/>
</dbReference>
<dbReference type="GO" id="GO:0005634">
    <property type="term" value="C:nucleus"/>
    <property type="evidence" value="ECO:0000250"/>
    <property type="project" value="UniProtKB"/>
</dbReference>
<dbReference type="GO" id="GO:0005516">
    <property type="term" value="F:calmodulin binding"/>
    <property type="evidence" value="ECO:0007669"/>
    <property type="project" value="UniProtKB-KW"/>
</dbReference>
<dbReference type="GO" id="GO:0001228">
    <property type="term" value="F:DNA-binding transcription activator activity, RNA polymerase II-specific"/>
    <property type="evidence" value="ECO:0007669"/>
    <property type="project" value="TreeGrafter"/>
</dbReference>
<dbReference type="GO" id="GO:0000978">
    <property type="term" value="F:RNA polymerase II cis-regulatory region sequence-specific DNA binding"/>
    <property type="evidence" value="ECO:0007669"/>
    <property type="project" value="TreeGrafter"/>
</dbReference>
<dbReference type="GO" id="GO:0030154">
    <property type="term" value="P:cell differentiation"/>
    <property type="evidence" value="ECO:0007669"/>
    <property type="project" value="UniProtKB-KW"/>
</dbReference>
<dbReference type="GO" id="GO:0030238">
    <property type="term" value="P:male sex determination"/>
    <property type="evidence" value="ECO:0007669"/>
    <property type="project" value="InterPro"/>
</dbReference>
<dbReference type="GO" id="GO:0007548">
    <property type="term" value="P:sex differentiation"/>
    <property type="evidence" value="ECO:0007669"/>
    <property type="project" value="UniProtKB-KW"/>
</dbReference>
<dbReference type="CDD" id="cd22034">
    <property type="entry name" value="HMG-box_SoxA_SRY"/>
    <property type="match status" value="1"/>
</dbReference>
<dbReference type="FunFam" id="1.10.30.10:FF:000002">
    <property type="entry name" value="transcription factor Sox-2"/>
    <property type="match status" value="1"/>
</dbReference>
<dbReference type="Gene3D" id="1.10.30.10">
    <property type="entry name" value="High mobility group box domain"/>
    <property type="match status" value="1"/>
</dbReference>
<dbReference type="InterPro" id="IPR009071">
    <property type="entry name" value="HMG_box_dom"/>
</dbReference>
<dbReference type="InterPro" id="IPR036910">
    <property type="entry name" value="HMG_box_dom_sf"/>
</dbReference>
<dbReference type="InterPro" id="IPR017253">
    <property type="entry name" value="SRY"/>
</dbReference>
<dbReference type="InterPro" id="IPR050140">
    <property type="entry name" value="SRY-related_HMG-box_TF-like"/>
</dbReference>
<dbReference type="PANTHER" id="PTHR10270:SF161">
    <property type="entry name" value="SEX-DETERMINING REGION Y PROTEIN"/>
    <property type="match status" value="1"/>
</dbReference>
<dbReference type="PANTHER" id="PTHR10270">
    <property type="entry name" value="SOX TRANSCRIPTION FACTOR"/>
    <property type="match status" value="1"/>
</dbReference>
<dbReference type="Pfam" id="PF00505">
    <property type="entry name" value="HMG_box"/>
    <property type="match status" value="1"/>
</dbReference>
<dbReference type="PIRSF" id="PIRSF037653">
    <property type="entry name" value="SRY"/>
    <property type="match status" value="1"/>
</dbReference>
<dbReference type="SMART" id="SM00398">
    <property type="entry name" value="HMG"/>
    <property type="match status" value="1"/>
</dbReference>
<dbReference type="SUPFAM" id="SSF47095">
    <property type="entry name" value="HMG-box"/>
    <property type="match status" value="1"/>
</dbReference>
<dbReference type="PROSITE" id="PS50118">
    <property type="entry name" value="HMG_BOX_2"/>
    <property type="match status" value="1"/>
</dbReference>
<comment type="function">
    <text evidence="1 2">Transcriptional regulator that controls a genetic switch in male development. It is necessary and sufficient for initiating male sex determination by directing the development of supporting cell precursors (pre-Sertoli cells) as Sertoli rather than granulosa cells. Involved in different aspects of gene regulation including promoter activation or repression. Binds to the DNA consensus sequence 5'-[AT]AACAA[AT]-3'. SRY HMG box recognizes DNA by partial intercalation in the minor groove and promotes DNA bending. Also involved in pre-mRNA splicing (By similarity). In male adult brain involved in the maintenance of motor functions of dopaminergic neurons (By similarity).</text>
</comment>
<comment type="subunit">
    <text evidence="2">Interacts with CALM, EP300, HDAC3, KPNB1, ZNF208 isoform KRAB-O, PARP1, SLC9A3R2 and WT1. The interaction with EP300 modulates its DNA-binding activity. The interaction with KPNB1 is sensitive to dissociation by Ran in the GTP-bound form. Interaction with PARP1 impaired its DNA-binding activity.</text>
</comment>
<comment type="subcellular location">
    <subcellularLocation>
        <location evidence="2">Nucleus speckle</location>
    </subcellularLocation>
    <subcellularLocation>
        <location evidence="2">Cytoplasm</location>
    </subcellularLocation>
    <subcellularLocation>
        <location evidence="2">Nucleus</location>
    </subcellularLocation>
</comment>
<comment type="PTM">
    <text evidence="2">Acetylation of Lys-130 contributes to its nuclear localization and enhances its interaction with KPNB1. Deacetylated by HDAC3.</text>
</comment>
<comment type="similarity">
    <text evidence="5">Belongs to the SRY family.</text>
</comment>
<comment type="online information" name="Protein Spotlight">
    <link uri="https://www.proteinspotlight.org/back_issues/080"/>
    <text>The tenuous nature of sex - Issue 80 of March 2007</text>
</comment>
<feature type="chain" id="PRO_0000048641" description="Sex-determining region Y protein">
    <location>
        <begin position="1"/>
        <end position="204"/>
    </location>
</feature>
<feature type="DNA-binding region" description="HMG box" evidence="3">
    <location>
        <begin position="54"/>
        <end position="122"/>
    </location>
</feature>
<feature type="region of interest" description="Disordered" evidence="4">
    <location>
        <begin position="32"/>
        <end position="52"/>
    </location>
</feature>
<feature type="region of interest" description="Disordered" evidence="4">
    <location>
        <begin position="169"/>
        <end position="204"/>
    </location>
</feature>
<feature type="compositionally biased region" description="Polar residues" evidence="4">
    <location>
        <begin position="175"/>
        <end position="187"/>
    </location>
</feature>
<feature type="compositionally biased region" description="Polar residues" evidence="4">
    <location>
        <begin position="194"/>
        <end position="204"/>
    </location>
</feature>
<keyword id="KW-0007">Acetylation</keyword>
<keyword id="KW-0010">Activator</keyword>
<keyword id="KW-0112">Calmodulin-binding</keyword>
<keyword id="KW-0963">Cytoplasm</keyword>
<keyword id="KW-0221">Differentiation</keyword>
<keyword id="KW-0238">DNA-binding</keyword>
<keyword id="KW-0539">Nucleus</keyword>
<keyword id="KW-0678">Repressor</keyword>
<keyword id="KW-0726">Sexual differentiation</keyword>
<keyword id="KW-0804">Transcription</keyword>
<keyword id="KW-0805">Transcription regulation</keyword>
<reference key="1">
    <citation type="journal article" date="2003" name="Mammal Study">
        <title>SRY gene structure and phylogeny in the cetacean species.</title>
        <authorList>
            <person name="Nishida S."/>
            <person name="Pastene L.A."/>
            <person name="Goto M."/>
            <person name="Koike H."/>
        </authorList>
    </citation>
    <scope>NUCLEOTIDE SEQUENCE [GENOMIC DNA]</scope>
</reference>
<proteinExistence type="inferred from homology"/>
<accession>Q864Q9</accession>